<proteinExistence type="inferred from homology"/>
<evidence type="ECO:0000250" key="1"/>
<evidence type="ECO:0000305" key="2"/>
<geneLocation type="chloroplast"/>
<feature type="chain" id="PRO_0000322371" description="Small ribosomal subunit protein uS4c">
    <location>
        <begin position="1"/>
        <end position="204"/>
    </location>
</feature>
<feature type="domain" description="S4 RNA-binding">
    <location>
        <begin position="90"/>
        <end position="150"/>
    </location>
</feature>
<dbReference type="EMBL" id="AB295950">
    <property type="protein sequence ID" value="BAF64899.1"/>
    <property type="molecule type" value="Genomic_DNA"/>
</dbReference>
<dbReference type="EMBL" id="AP009569">
    <property type="protein sequence ID" value="BAH11301.1"/>
    <property type="molecule type" value="Genomic_DNA"/>
</dbReference>
<dbReference type="RefSeq" id="YP_002519790.1">
    <property type="nucleotide sequence ID" value="NC_011942.1"/>
</dbReference>
<dbReference type="SMR" id="A6BM54"/>
<dbReference type="GeneID" id="7368149"/>
<dbReference type="GO" id="GO:0009507">
    <property type="term" value="C:chloroplast"/>
    <property type="evidence" value="ECO:0007669"/>
    <property type="project" value="UniProtKB-SubCell"/>
</dbReference>
<dbReference type="GO" id="GO:0015935">
    <property type="term" value="C:small ribosomal subunit"/>
    <property type="evidence" value="ECO:0007669"/>
    <property type="project" value="InterPro"/>
</dbReference>
<dbReference type="GO" id="GO:0019843">
    <property type="term" value="F:rRNA binding"/>
    <property type="evidence" value="ECO:0007669"/>
    <property type="project" value="UniProtKB-UniRule"/>
</dbReference>
<dbReference type="GO" id="GO:0003735">
    <property type="term" value="F:structural constituent of ribosome"/>
    <property type="evidence" value="ECO:0007669"/>
    <property type="project" value="InterPro"/>
</dbReference>
<dbReference type="GO" id="GO:0042274">
    <property type="term" value="P:ribosomal small subunit biogenesis"/>
    <property type="evidence" value="ECO:0007669"/>
    <property type="project" value="TreeGrafter"/>
</dbReference>
<dbReference type="GO" id="GO:0006412">
    <property type="term" value="P:translation"/>
    <property type="evidence" value="ECO:0007669"/>
    <property type="project" value="UniProtKB-UniRule"/>
</dbReference>
<dbReference type="CDD" id="cd00165">
    <property type="entry name" value="S4"/>
    <property type="match status" value="1"/>
</dbReference>
<dbReference type="FunFam" id="1.10.1050.10:FF:000002">
    <property type="entry name" value="30S ribosomal protein S4, chloroplastic"/>
    <property type="match status" value="1"/>
</dbReference>
<dbReference type="FunFam" id="3.10.290.10:FF:000081">
    <property type="entry name" value="30S ribosomal protein S4, chloroplastic"/>
    <property type="match status" value="1"/>
</dbReference>
<dbReference type="Gene3D" id="1.10.1050.10">
    <property type="entry name" value="Ribosomal Protein S4 Delta 41, Chain A, domain 1"/>
    <property type="match status" value="1"/>
</dbReference>
<dbReference type="Gene3D" id="3.10.290.10">
    <property type="entry name" value="RNA-binding S4 domain"/>
    <property type="match status" value="1"/>
</dbReference>
<dbReference type="HAMAP" id="MF_01306_B">
    <property type="entry name" value="Ribosomal_uS4_B"/>
    <property type="match status" value="1"/>
</dbReference>
<dbReference type="InterPro" id="IPR022801">
    <property type="entry name" value="Ribosomal_uS4"/>
</dbReference>
<dbReference type="InterPro" id="IPR005709">
    <property type="entry name" value="Ribosomal_uS4_bac-type"/>
</dbReference>
<dbReference type="InterPro" id="IPR018079">
    <property type="entry name" value="Ribosomal_uS4_CS"/>
</dbReference>
<dbReference type="InterPro" id="IPR001912">
    <property type="entry name" value="Ribosomal_uS4_N"/>
</dbReference>
<dbReference type="InterPro" id="IPR002942">
    <property type="entry name" value="S4_RNA-bd"/>
</dbReference>
<dbReference type="InterPro" id="IPR036986">
    <property type="entry name" value="S4_RNA-bd_sf"/>
</dbReference>
<dbReference type="NCBIfam" id="NF003717">
    <property type="entry name" value="PRK05327.1"/>
    <property type="match status" value="1"/>
</dbReference>
<dbReference type="NCBIfam" id="TIGR01017">
    <property type="entry name" value="rpsD_bact"/>
    <property type="match status" value="1"/>
</dbReference>
<dbReference type="PANTHER" id="PTHR11831">
    <property type="entry name" value="30S 40S RIBOSOMAL PROTEIN"/>
    <property type="match status" value="1"/>
</dbReference>
<dbReference type="PANTHER" id="PTHR11831:SF4">
    <property type="entry name" value="SMALL RIBOSOMAL SUBUNIT PROTEIN US4M"/>
    <property type="match status" value="1"/>
</dbReference>
<dbReference type="Pfam" id="PF00163">
    <property type="entry name" value="Ribosomal_S4"/>
    <property type="match status" value="1"/>
</dbReference>
<dbReference type="Pfam" id="PF01479">
    <property type="entry name" value="S4"/>
    <property type="match status" value="1"/>
</dbReference>
<dbReference type="SMART" id="SM01390">
    <property type="entry name" value="Ribosomal_S4"/>
    <property type="match status" value="1"/>
</dbReference>
<dbReference type="SMART" id="SM00363">
    <property type="entry name" value="S4"/>
    <property type="match status" value="1"/>
</dbReference>
<dbReference type="SUPFAM" id="SSF55174">
    <property type="entry name" value="Alpha-L RNA-binding motif"/>
    <property type="match status" value="1"/>
</dbReference>
<dbReference type="PROSITE" id="PS00632">
    <property type="entry name" value="RIBOSOMAL_S4"/>
    <property type="match status" value="1"/>
</dbReference>
<dbReference type="PROSITE" id="PS50889">
    <property type="entry name" value="S4"/>
    <property type="match status" value="1"/>
</dbReference>
<organism>
    <name type="scientific">Gnetum parvifolium</name>
    <name type="common">Small-leaved jointfir</name>
    <name type="synonym">Gnetum scandens var. parvifolium</name>
    <dbReference type="NCBI Taxonomy" id="33153"/>
    <lineage>
        <taxon>Eukaryota</taxon>
        <taxon>Viridiplantae</taxon>
        <taxon>Streptophyta</taxon>
        <taxon>Embryophyta</taxon>
        <taxon>Tracheophyta</taxon>
        <taxon>Spermatophyta</taxon>
        <taxon>Gnetopsida</taxon>
        <taxon>Gnetidae</taxon>
        <taxon>Gnetales</taxon>
        <taxon>Gnetaceae</taxon>
        <taxon>Gnetum</taxon>
    </lineage>
</organism>
<gene>
    <name type="primary">rps4</name>
</gene>
<comment type="function">
    <text evidence="1">One of the primary rRNA binding proteins, it binds directly to 16S rRNA where it nucleates assembly of the body of the 30S subunit.</text>
</comment>
<comment type="function">
    <text evidence="1">With S5 and S12 plays an important role in translational accuracy.</text>
</comment>
<comment type="subunit">
    <text evidence="1">Part of the 30S ribosomal subunit. Contacts protein S5. The interaction surface between S4 and S5 is involved in control of translational fidelity (By similarity).</text>
</comment>
<comment type="subcellular location">
    <subcellularLocation>
        <location>Plastid</location>
        <location>Chloroplast</location>
    </subcellularLocation>
</comment>
<comment type="similarity">
    <text evidence="2">Belongs to the universal ribosomal protein uS4 family.</text>
</comment>
<accession>A6BM54</accession>
<accession>B7ZIC1</accession>
<keyword id="KW-0150">Chloroplast</keyword>
<keyword id="KW-0934">Plastid</keyword>
<keyword id="KW-0687">Ribonucleoprotein</keyword>
<keyword id="KW-0689">Ribosomal protein</keyword>
<keyword id="KW-0694">RNA-binding</keyword>
<keyword id="KW-0699">rRNA-binding</keyword>
<reference key="1">
    <citation type="journal article" date="2007" name="Mol. Biol. Evol.">
        <title>Chloroplast genome (cpDNA) of Cycas taitungensis and 56 cp protein-coding genes of Gnetum parvifolium: insights into cpDNA evolution and phylogeny of extant seed plants.</title>
        <authorList>
            <person name="Wu C.-S."/>
            <person name="Wang Y.-N."/>
            <person name="Liu S.-M."/>
            <person name="Chaw S.-M."/>
        </authorList>
    </citation>
    <scope>NUCLEOTIDE SEQUENCE [LARGE SCALE GENOMIC DNA]</scope>
</reference>
<reference key="2">
    <citation type="journal article" date="2009" name="Mol. Phylogenet. Evol.">
        <title>Evolution of reduced and compact chloroplast genomes (cpDNAs) in gnetophytes: Selection toward a lower-cost strategy.</title>
        <authorList>
            <person name="Wu C.-S."/>
            <person name="Lai Y.-T."/>
            <person name="Lin C.-P."/>
            <person name="Wang Y.-N."/>
            <person name="Chaw S.-M."/>
        </authorList>
    </citation>
    <scope>NUCLEOTIDE SEQUENCE [LARGE SCALE GENOMIC DNA]</scope>
</reference>
<protein>
    <recommendedName>
        <fullName evidence="2">Small ribosomal subunit protein uS4c</fullName>
    </recommendedName>
    <alternativeName>
        <fullName>30S ribosomal protein S4, chloroplastic</fullName>
    </alternativeName>
</protein>
<sequence length="204" mass="24213">MSRYLGPRFKIIRRLKTLPGLTSKRPKYKKRVRRSSRPWWKKSRHLACLQEKQKIRFHFGLTERQLRQYVQITKKVQGSTGQVLLQLLEMRLDNILYRLGLAGTIPGARQLVNHRHILVNDHVVNIPSYQCKPQDVITIKGKKTDQLKTIITRNRNKARENKIPYHLTLDLSQNKGIVNKIIDRKDIQLNIKEMLVIEYYSRRI</sequence>
<name>RR4_GNEPA</name>